<feature type="chain" id="PRO_0000317728" description="Deubiquitinase DESI2">
    <location>
        <begin position="1"/>
        <end position="192"/>
    </location>
</feature>
<feature type="domain" description="PPPDE" evidence="3">
    <location>
        <begin position="4"/>
        <end position="148"/>
    </location>
</feature>
<feature type="region of interest" description="Disordered" evidence="4">
    <location>
        <begin position="160"/>
        <end position="192"/>
    </location>
</feature>
<feature type="compositionally biased region" description="Acidic residues" evidence="4">
    <location>
        <begin position="162"/>
        <end position="171"/>
    </location>
</feature>
<feature type="compositionally biased region" description="Low complexity" evidence="4">
    <location>
        <begin position="172"/>
        <end position="182"/>
    </location>
</feature>
<feature type="active site" evidence="3">
    <location>
        <position position="29"/>
    </location>
</feature>
<feature type="active site" evidence="1 3">
    <location>
        <position position="107"/>
    </location>
</feature>
<keyword id="KW-0963">Cytoplasm</keyword>
<keyword id="KW-0378">Hydrolase</keyword>
<keyword id="KW-0645">Protease</keyword>
<keyword id="KW-1185">Reference proteome</keyword>
<keyword id="KW-0833">Ubl conjugation pathway</keyword>
<sequence>MANQPIILNVYDMYWINEYTSSLGIGVFHSGIQVYGREFAYGGHPYPFSGVFEISPGDSTELGDTFKFKEAIALGSTDFTENDIEKIIEELGKEYKGNAYHLMHKNCNHFSSALSEILCGKEIPRWVNRLAYFSTCVPFLQSCLPKEWLTPAALQSSISQELQDELEEAEDAAASASTSTTAMPRPGRHTKL</sequence>
<reference key="1">
    <citation type="submission" date="2004-12" db="EMBL/GenBank/DDBJ databases">
        <authorList>
            <consortium name="NIH - Xenopus Gene Collection (XGC) project"/>
        </authorList>
    </citation>
    <scope>NUCLEOTIDE SEQUENCE [LARGE SCALE MRNA]</scope>
    <source>
        <tissue>Testis</tissue>
    </source>
</reference>
<comment type="function">
    <text evidence="1">Has deubiquitinating activity towards 'Lys-48'- and 'Lys-63'-linked polyubiquitin chains. Exhibits palmitoyl protein thioesterase (S-depalmitoylation) activity towards synthetic substrates 4-methylumbelliferyl-6-S-palmitoyl-beta-D-glucopyranoside and S-depalmitoylation probe 5 (DPP-5).</text>
</comment>
<comment type="catalytic activity">
    <reaction evidence="1">
        <text>Thiol-dependent hydrolysis of ester, thioester, amide, peptide and isopeptide bonds formed by the C-terminal Gly of ubiquitin (a 76-residue protein attached to proteins as an intracellular targeting signal).</text>
        <dbReference type="EC" id="3.4.19.12"/>
    </reaction>
</comment>
<comment type="catalytic activity">
    <reaction evidence="1">
        <text>S-hexadecanoyl-L-cysteinyl-[protein] + H2O = L-cysteinyl-[protein] + hexadecanoate + H(+)</text>
        <dbReference type="Rhea" id="RHEA:19233"/>
        <dbReference type="Rhea" id="RHEA-COMP:10131"/>
        <dbReference type="Rhea" id="RHEA-COMP:11032"/>
        <dbReference type="ChEBI" id="CHEBI:7896"/>
        <dbReference type="ChEBI" id="CHEBI:15377"/>
        <dbReference type="ChEBI" id="CHEBI:15378"/>
        <dbReference type="ChEBI" id="CHEBI:29950"/>
        <dbReference type="ChEBI" id="CHEBI:74151"/>
        <dbReference type="EC" id="3.1.2.22"/>
    </reaction>
    <physiologicalReaction direction="left-to-right" evidence="1">
        <dbReference type="Rhea" id="RHEA:19234"/>
    </physiologicalReaction>
</comment>
<comment type="subcellular location">
    <subcellularLocation>
        <location evidence="2">Cytoplasm</location>
    </subcellularLocation>
</comment>
<comment type="similarity">
    <text evidence="5">Belongs to the DeSI family.</text>
</comment>
<gene>
    <name type="primary">desi2</name>
    <name type="synonym">fam152a</name>
    <name type="synonym">pppde1</name>
</gene>
<evidence type="ECO:0000250" key="1">
    <source>
        <dbReference type="UniProtKB" id="Q9BSY9"/>
    </source>
</evidence>
<evidence type="ECO:0000250" key="2">
    <source>
        <dbReference type="UniProtKB" id="Q9D291"/>
    </source>
</evidence>
<evidence type="ECO:0000255" key="3">
    <source>
        <dbReference type="PROSITE-ProRule" id="PRU01205"/>
    </source>
</evidence>
<evidence type="ECO:0000256" key="4">
    <source>
        <dbReference type="SAM" id="MobiDB-lite"/>
    </source>
</evidence>
<evidence type="ECO:0000305" key="5"/>
<proteinExistence type="evidence at transcript level"/>
<name>DESI2_XENLA</name>
<dbReference type="EC" id="3.4.19.12" evidence="1"/>
<dbReference type="EC" id="3.1.2.22" evidence="1"/>
<dbReference type="EMBL" id="BC087412">
    <property type="protein sequence ID" value="AAH87412.1"/>
    <property type="molecule type" value="mRNA"/>
</dbReference>
<dbReference type="RefSeq" id="NP_001088756.1">
    <property type="nucleotide sequence ID" value="NM_001095287.1"/>
</dbReference>
<dbReference type="SMR" id="Q5PQ09"/>
<dbReference type="MEROPS" id="C97.002"/>
<dbReference type="DNASU" id="496020"/>
<dbReference type="GeneID" id="496020"/>
<dbReference type="KEGG" id="xla:496020"/>
<dbReference type="AGR" id="Xenbase:XB-GENE-1014049"/>
<dbReference type="CTD" id="496020"/>
<dbReference type="Xenbase" id="XB-GENE-1014049">
    <property type="gene designation" value="desi2.L"/>
</dbReference>
<dbReference type="OMA" id="PLEGCRW"/>
<dbReference type="OrthoDB" id="412286at2759"/>
<dbReference type="Proteomes" id="UP000186698">
    <property type="component" value="Chromosome 5L"/>
</dbReference>
<dbReference type="Bgee" id="496020">
    <property type="expression patterns" value="Expressed in testis and 19 other cell types or tissues"/>
</dbReference>
<dbReference type="GO" id="GO:0005737">
    <property type="term" value="C:cytoplasm"/>
    <property type="evidence" value="ECO:0000250"/>
    <property type="project" value="UniProtKB"/>
</dbReference>
<dbReference type="GO" id="GO:0004843">
    <property type="term" value="F:cysteine-type deubiquitinase activity"/>
    <property type="evidence" value="ECO:0007669"/>
    <property type="project" value="UniProtKB-EC"/>
</dbReference>
<dbReference type="GO" id="GO:0101005">
    <property type="term" value="F:deubiquitinase activity"/>
    <property type="evidence" value="ECO:0000318"/>
    <property type="project" value="GO_Central"/>
</dbReference>
<dbReference type="GO" id="GO:0052816">
    <property type="term" value="F:long-chain fatty acyl-CoA hydrolase activity"/>
    <property type="evidence" value="ECO:0000250"/>
    <property type="project" value="UniProtKB"/>
</dbReference>
<dbReference type="GO" id="GO:0008474">
    <property type="term" value="F:palmitoyl-(protein) hydrolase activity"/>
    <property type="evidence" value="ECO:0007669"/>
    <property type="project" value="RHEA"/>
</dbReference>
<dbReference type="GO" id="GO:0016579">
    <property type="term" value="P:protein deubiquitination"/>
    <property type="evidence" value="ECO:0007669"/>
    <property type="project" value="TreeGrafter"/>
</dbReference>
<dbReference type="GO" id="GO:0006508">
    <property type="term" value="P:proteolysis"/>
    <property type="evidence" value="ECO:0007669"/>
    <property type="project" value="UniProtKB-KW"/>
</dbReference>
<dbReference type="FunFam" id="3.90.1720.30:FF:000001">
    <property type="entry name" value="desumoylating isopeptidase 2"/>
    <property type="match status" value="1"/>
</dbReference>
<dbReference type="Gene3D" id="3.90.1720.30">
    <property type="entry name" value="PPPDE domains"/>
    <property type="match status" value="1"/>
</dbReference>
<dbReference type="InterPro" id="IPR008580">
    <property type="entry name" value="PPPDE_dom"/>
</dbReference>
<dbReference type="InterPro" id="IPR042266">
    <property type="entry name" value="PPPDE_sf"/>
</dbReference>
<dbReference type="PANTHER" id="PTHR12378">
    <property type="entry name" value="DESUMOYLATING ISOPEPTIDASE"/>
    <property type="match status" value="1"/>
</dbReference>
<dbReference type="PANTHER" id="PTHR12378:SF6">
    <property type="entry name" value="DEUBIQUITINASE DESI2"/>
    <property type="match status" value="1"/>
</dbReference>
<dbReference type="Pfam" id="PF05903">
    <property type="entry name" value="Peptidase_C97"/>
    <property type="match status" value="1"/>
</dbReference>
<dbReference type="SMART" id="SM01179">
    <property type="entry name" value="DUF862"/>
    <property type="match status" value="1"/>
</dbReference>
<dbReference type="PROSITE" id="PS51858">
    <property type="entry name" value="PPPDE"/>
    <property type="match status" value="1"/>
</dbReference>
<accession>Q5PQ09</accession>
<organism>
    <name type="scientific">Xenopus laevis</name>
    <name type="common">African clawed frog</name>
    <dbReference type="NCBI Taxonomy" id="8355"/>
    <lineage>
        <taxon>Eukaryota</taxon>
        <taxon>Metazoa</taxon>
        <taxon>Chordata</taxon>
        <taxon>Craniata</taxon>
        <taxon>Vertebrata</taxon>
        <taxon>Euteleostomi</taxon>
        <taxon>Amphibia</taxon>
        <taxon>Batrachia</taxon>
        <taxon>Anura</taxon>
        <taxon>Pipoidea</taxon>
        <taxon>Pipidae</taxon>
        <taxon>Xenopodinae</taxon>
        <taxon>Xenopus</taxon>
        <taxon>Xenopus</taxon>
    </lineage>
</organism>
<protein>
    <recommendedName>
        <fullName evidence="1">Deubiquitinase DESI2</fullName>
        <ecNumber evidence="1">3.4.19.12</ecNumber>
    </recommendedName>
    <alternativeName>
        <fullName>Desumoylating isopeptidase 2</fullName>
        <shortName>DeSI-2</shortName>
    </alternativeName>
    <alternativeName>
        <fullName>PPPDE peptidase domain-containing protein 1</fullName>
    </alternativeName>
    <alternativeName>
        <fullName>Palmitoyl protein thioesterase DESI2</fullName>
        <ecNumber evidence="1">3.1.2.22</ecNumber>
    </alternativeName>
    <alternativeName>
        <fullName>Protein FAM152A</fullName>
    </alternativeName>
    <alternativeName>
        <fullName>S-depalmitoylase DESI2</fullName>
    </alternativeName>
</protein>